<organism>
    <name type="scientific">Porphyromonas gingivalis (strain ATCC BAA-308 / W83)</name>
    <dbReference type="NCBI Taxonomy" id="242619"/>
    <lineage>
        <taxon>Bacteria</taxon>
        <taxon>Pseudomonadati</taxon>
        <taxon>Bacteroidota</taxon>
        <taxon>Bacteroidia</taxon>
        <taxon>Bacteroidales</taxon>
        <taxon>Porphyromonadaceae</taxon>
        <taxon>Porphyromonas</taxon>
    </lineage>
</organism>
<protein>
    <recommendedName>
        <fullName evidence="1">Proline--tRNA ligase</fullName>
        <ecNumber evidence="1">6.1.1.15</ecNumber>
    </recommendedName>
    <alternativeName>
        <fullName evidence="1">Prolyl-tRNA synthetase</fullName>
        <shortName evidence="1">ProRS</shortName>
    </alternativeName>
</protein>
<sequence length="493" mass="56159">MAKELKELTPRSESYSQWYQDLVIKADLAENSAVRGCMVIKPYGYAIWEKMQRQLDDMFKETGHVNAYFPLFIPKSFLSREAEHVEGFAKECAVVTHYRLKANPDGDGVVVDPQAKLEEELIVRPTSETIIWNTYKNWIQSHRDLPILCNQWANVVRWEMRTRLFLRTAEFLWQEGHTAHATKEEAEEEARRMLEVYATFAEEYMAMPVVKGVKSANERFAGAVDTYTIEALMQDGKALQSGTSHFLGQNFAKAFNVTFADKDGNRDFVWATSWGVSTRLMGALIMSHSDDNGLVLPPKLAPYQVVIIPIYRNEEQLAQIDEKATQITQALRAKGISVKYDNSDNKKPGWKFAEYELKGIPVRLAMGARDLENNTIEIARRDTLTKETVGLDGIEETVATLLDDIQKNIFQKALNYRKEHTITVDSYEEFKEKIEDGGFILAHWDGTSETEERIKAETKATIRCIPLNGDMTPGKCMVTGKPSPQRVLFARAY</sequence>
<gene>
    <name evidence="1" type="primary">proS</name>
    <name type="ordered locus">PG_0962</name>
</gene>
<evidence type="ECO:0000255" key="1">
    <source>
        <dbReference type="HAMAP-Rule" id="MF_01571"/>
    </source>
</evidence>
<proteinExistence type="inferred from homology"/>
<feature type="chain" id="PRO_0000249147" description="Proline--tRNA ligase">
    <location>
        <begin position="1"/>
        <end position="493"/>
    </location>
</feature>
<dbReference type="EC" id="6.1.1.15" evidence="1"/>
<dbReference type="EMBL" id="AE015924">
    <property type="protein sequence ID" value="AAQ66092.1"/>
    <property type="molecule type" value="Genomic_DNA"/>
</dbReference>
<dbReference type="RefSeq" id="WP_005874388.1">
    <property type="nucleotide sequence ID" value="NC_002950.2"/>
</dbReference>
<dbReference type="SMR" id="Q7MVS7"/>
<dbReference type="STRING" id="242619.PG_0962"/>
<dbReference type="EnsemblBacteria" id="AAQ66092">
    <property type="protein sequence ID" value="AAQ66092"/>
    <property type="gene ID" value="PG_0962"/>
</dbReference>
<dbReference type="KEGG" id="pgi:PG_0962"/>
<dbReference type="PATRIC" id="fig|242619.8.peg.890"/>
<dbReference type="eggNOG" id="COG0442">
    <property type="taxonomic scope" value="Bacteria"/>
</dbReference>
<dbReference type="HOGENOM" id="CLU_001882_4_2_10"/>
<dbReference type="BioCyc" id="PGIN242619:G1G02-896-MONOMER"/>
<dbReference type="Proteomes" id="UP000000588">
    <property type="component" value="Chromosome"/>
</dbReference>
<dbReference type="GO" id="GO:0017101">
    <property type="term" value="C:aminoacyl-tRNA synthetase multienzyme complex"/>
    <property type="evidence" value="ECO:0007669"/>
    <property type="project" value="TreeGrafter"/>
</dbReference>
<dbReference type="GO" id="GO:0005737">
    <property type="term" value="C:cytoplasm"/>
    <property type="evidence" value="ECO:0007669"/>
    <property type="project" value="UniProtKB-SubCell"/>
</dbReference>
<dbReference type="GO" id="GO:0005524">
    <property type="term" value="F:ATP binding"/>
    <property type="evidence" value="ECO:0007669"/>
    <property type="project" value="UniProtKB-UniRule"/>
</dbReference>
<dbReference type="GO" id="GO:0004827">
    <property type="term" value="F:proline-tRNA ligase activity"/>
    <property type="evidence" value="ECO:0007669"/>
    <property type="project" value="UniProtKB-UniRule"/>
</dbReference>
<dbReference type="GO" id="GO:0006433">
    <property type="term" value="P:prolyl-tRNA aminoacylation"/>
    <property type="evidence" value="ECO:0007669"/>
    <property type="project" value="UniProtKB-UniRule"/>
</dbReference>
<dbReference type="CDD" id="cd00862">
    <property type="entry name" value="ProRS_anticodon_zinc"/>
    <property type="match status" value="1"/>
</dbReference>
<dbReference type="CDD" id="cd00778">
    <property type="entry name" value="ProRS_core_arch_euk"/>
    <property type="match status" value="1"/>
</dbReference>
<dbReference type="FunFam" id="3.40.50.800:FF:000005">
    <property type="entry name" value="bifunctional glutamate/proline--tRNA ligase"/>
    <property type="match status" value="1"/>
</dbReference>
<dbReference type="FunFam" id="3.30.930.10:FF:000023">
    <property type="entry name" value="Proline--tRNA ligase"/>
    <property type="match status" value="1"/>
</dbReference>
<dbReference type="Gene3D" id="3.40.50.800">
    <property type="entry name" value="Anticodon-binding domain"/>
    <property type="match status" value="1"/>
</dbReference>
<dbReference type="Gene3D" id="3.30.930.10">
    <property type="entry name" value="Bira Bifunctional Protein, Domain 2"/>
    <property type="match status" value="1"/>
</dbReference>
<dbReference type="Gene3D" id="3.30.110.30">
    <property type="entry name" value="C-terminal domain of ProRS"/>
    <property type="match status" value="1"/>
</dbReference>
<dbReference type="HAMAP" id="MF_01571">
    <property type="entry name" value="Pro_tRNA_synth_type3"/>
    <property type="match status" value="1"/>
</dbReference>
<dbReference type="InterPro" id="IPR002314">
    <property type="entry name" value="aa-tRNA-synt_IIb"/>
</dbReference>
<dbReference type="InterPro" id="IPR006195">
    <property type="entry name" value="aa-tRNA-synth_II"/>
</dbReference>
<dbReference type="InterPro" id="IPR045864">
    <property type="entry name" value="aa-tRNA-synth_II/BPL/LPL"/>
</dbReference>
<dbReference type="InterPro" id="IPR004154">
    <property type="entry name" value="Anticodon-bd"/>
</dbReference>
<dbReference type="InterPro" id="IPR036621">
    <property type="entry name" value="Anticodon-bd_dom_sf"/>
</dbReference>
<dbReference type="InterPro" id="IPR004499">
    <property type="entry name" value="Pro-tRNA-ligase_IIa_arc-type"/>
</dbReference>
<dbReference type="InterPro" id="IPR016061">
    <property type="entry name" value="Pro-tRNA_ligase_II_C"/>
</dbReference>
<dbReference type="InterPro" id="IPR017449">
    <property type="entry name" value="Pro-tRNA_synth_II"/>
</dbReference>
<dbReference type="InterPro" id="IPR033721">
    <property type="entry name" value="ProRS_core_arch_euk"/>
</dbReference>
<dbReference type="NCBIfam" id="TIGR00408">
    <property type="entry name" value="proS_fam_I"/>
    <property type="match status" value="1"/>
</dbReference>
<dbReference type="PANTHER" id="PTHR43382:SF2">
    <property type="entry name" value="BIFUNCTIONAL GLUTAMATE_PROLINE--TRNA LIGASE"/>
    <property type="match status" value="1"/>
</dbReference>
<dbReference type="PANTHER" id="PTHR43382">
    <property type="entry name" value="PROLYL-TRNA SYNTHETASE"/>
    <property type="match status" value="1"/>
</dbReference>
<dbReference type="Pfam" id="PF03129">
    <property type="entry name" value="HGTP_anticodon"/>
    <property type="match status" value="1"/>
</dbReference>
<dbReference type="Pfam" id="PF09180">
    <property type="entry name" value="ProRS-C_1"/>
    <property type="match status" value="1"/>
</dbReference>
<dbReference type="Pfam" id="PF00587">
    <property type="entry name" value="tRNA-synt_2b"/>
    <property type="match status" value="1"/>
</dbReference>
<dbReference type="SMART" id="SM00946">
    <property type="entry name" value="ProRS-C_1"/>
    <property type="match status" value="1"/>
</dbReference>
<dbReference type="SUPFAM" id="SSF64586">
    <property type="entry name" value="C-terminal domain of ProRS"/>
    <property type="match status" value="1"/>
</dbReference>
<dbReference type="SUPFAM" id="SSF52954">
    <property type="entry name" value="Class II aaRS ABD-related"/>
    <property type="match status" value="1"/>
</dbReference>
<dbReference type="SUPFAM" id="SSF55681">
    <property type="entry name" value="Class II aaRS and biotin synthetases"/>
    <property type="match status" value="1"/>
</dbReference>
<dbReference type="PROSITE" id="PS50862">
    <property type="entry name" value="AA_TRNA_LIGASE_II"/>
    <property type="match status" value="1"/>
</dbReference>
<name>SYP_PORGI</name>
<keyword id="KW-0030">Aminoacyl-tRNA synthetase</keyword>
<keyword id="KW-0067">ATP-binding</keyword>
<keyword id="KW-0963">Cytoplasm</keyword>
<keyword id="KW-0436">Ligase</keyword>
<keyword id="KW-0547">Nucleotide-binding</keyword>
<keyword id="KW-0648">Protein biosynthesis</keyword>
<keyword id="KW-1185">Reference proteome</keyword>
<reference key="1">
    <citation type="journal article" date="2003" name="J. Bacteriol.">
        <title>Complete genome sequence of the oral pathogenic bacterium Porphyromonas gingivalis strain W83.</title>
        <authorList>
            <person name="Nelson K.E."/>
            <person name="Fleischmann R.D."/>
            <person name="DeBoy R.T."/>
            <person name="Paulsen I.T."/>
            <person name="Fouts D.E."/>
            <person name="Eisen J.A."/>
            <person name="Daugherty S.C."/>
            <person name="Dodson R.J."/>
            <person name="Durkin A.S."/>
            <person name="Gwinn M.L."/>
            <person name="Haft D.H."/>
            <person name="Kolonay J.F."/>
            <person name="Nelson W.C."/>
            <person name="Mason T.M."/>
            <person name="Tallon L."/>
            <person name="Gray J."/>
            <person name="Granger D."/>
            <person name="Tettelin H."/>
            <person name="Dong H."/>
            <person name="Galvin J.L."/>
            <person name="Duncan M.J."/>
            <person name="Dewhirst F.E."/>
            <person name="Fraser C.M."/>
        </authorList>
    </citation>
    <scope>NUCLEOTIDE SEQUENCE [LARGE SCALE GENOMIC DNA]</scope>
    <source>
        <strain>ATCC BAA-308 / W83</strain>
    </source>
</reference>
<comment type="function">
    <text evidence="1">Catalyzes the attachment of proline to tRNA(Pro) in a two-step reaction: proline is first activated by ATP to form Pro-AMP and then transferred to the acceptor end of tRNA(Pro).</text>
</comment>
<comment type="catalytic activity">
    <reaction evidence="1">
        <text>tRNA(Pro) + L-proline + ATP = L-prolyl-tRNA(Pro) + AMP + diphosphate</text>
        <dbReference type="Rhea" id="RHEA:14305"/>
        <dbReference type="Rhea" id="RHEA-COMP:9700"/>
        <dbReference type="Rhea" id="RHEA-COMP:9702"/>
        <dbReference type="ChEBI" id="CHEBI:30616"/>
        <dbReference type="ChEBI" id="CHEBI:33019"/>
        <dbReference type="ChEBI" id="CHEBI:60039"/>
        <dbReference type="ChEBI" id="CHEBI:78442"/>
        <dbReference type="ChEBI" id="CHEBI:78532"/>
        <dbReference type="ChEBI" id="CHEBI:456215"/>
        <dbReference type="EC" id="6.1.1.15"/>
    </reaction>
</comment>
<comment type="subunit">
    <text evidence="1">Homodimer.</text>
</comment>
<comment type="subcellular location">
    <subcellularLocation>
        <location evidence="1">Cytoplasm</location>
    </subcellularLocation>
</comment>
<comment type="domain">
    <text evidence="1">Consists of three domains: the N-terminal catalytic domain, the anticodon-binding domain and the C-terminal extension.</text>
</comment>
<comment type="similarity">
    <text evidence="1">Belongs to the class-II aminoacyl-tRNA synthetase family. ProS type 3 subfamily.</text>
</comment>
<accession>Q7MVS7</accession>